<feature type="initiator methionine" description="Removed" evidence="1 2 3 4">
    <location>
        <position position="1"/>
    </location>
</feature>
<feature type="chain" id="PRO_0000160030" description="Superoxide dismutase [Mn]">
    <location>
        <begin position="2"/>
        <end position="206"/>
    </location>
</feature>
<feature type="binding site">
    <location>
        <position position="27"/>
    </location>
    <ligand>
        <name>Mn(2+)</name>
        <dbReference type="ChEBI" id="CHEBI:29035"/>
    </ligand>
</feature>
<feature type="binding site">
    <location>
        <position position="82"/>
    </location>
    <ligand>
        <name>Mn(2+)</name>
        <dbReference type="ChEBI" id="CHEBI:29035"/>
    </ligand>
</feature>
<feature type="binding site">
    <location>
        <position position="168"/>
    </location>
    <ligand>
        <name>Mn(2+)</name>
        <dbReference type="ChEBI" id="CHEBI:29035"/>
    </ligand>
</feature>
<feature type="binding site">
    <location>
        <position position="172"/>
    </location>
    <ligand>
        <name>Mn(2+)</name>
        <dbReference type="ChEBI" id="CHEBI:29035"/>
    </ligand>
</feature>
<feature type="sequence variant" description="In strain: B.">
    <original>M</original>
    <variation>L</variation>
    <location>
        <position position="165"/>
    </location>
</feature>
<feature type="sequence conflict" description="In Ref. 9; AA sequence." evidence="5" ref="9">
    <original>I</original>
    <variation>L</variation>
    <location>
        <position position="26"/>
    </location>
</feature>
<feature type="turn" evidence="6">
    <location>
        <begin position="12"/>
        <end position="18"/>
    </location>
</feature>
<feature type="helix" evidence="6">
    <location>
        <begin position="21"/>
        <end position="29"/>
    </location>
</feature>
<feature type="helix" evidence="6">
    <location>
        <begin position="31"/>
        <end position="43"/>
    </location>
</feature>
<feature type="helix" evidence="6">
    <location>
        <begin position="47"/>
        <end position="50"/>
    </location>
</feature>
<feature type="helix" evidence="6">
    <location>
        <begin position="54"/>
        <end position="57"/>
    </location>
</feature>
<feature type="helix" evidence="6">
    <location>
        <begin position="61"/>
        <end position="63"/>
    </location>
</feature>
<feature type="helix" evidence="6">
    <location>
        <begin position="66"/>
        <end position="68"/>
    </location>
</feature>
<feature type="helix" evidence="6">
    <location>
        <begin position="69"/>
        <end position="87"/>
    </location>
</feature>
<feature type="helix" evidence="6">
    <location>
        <begin position="97"/>
        <end position="107"/>
    </location>
</feature>
<feature type="helix" evidence="6">
    <location>
        <begin position="110"/>
        <end position="123"/>
    </location>
</feature>
<feature type="strand" evidence="6">
    <location>
        <begin position="126"/>
        <end position="135"/>
    </location>
</feature>
<feature type="strand" evidence="6">
    <location>
        <begin position="138"/>
        <end position="145"/>
    </location>
</feature>
<feature type="helix" evidence="6">
    <location>
        <begin position="150"/>
        <end position="152"/>
    </location>
</feature>
<feature type="helix" evidence="6">
    <location>
        <begin position="154"/>
        <end position="157"/>
    </location>
</feature>
<feature type="strand" evidence="6">
    <location>
        <begin position="161"/>
        <end position="168"/>
    </location>
</feature>
<feature type="helix" evidence="6">
    <location>
        <begin position="171"/>
        <end position="173"/>
    </location>
</feature>
<feature type="helix" evidence="6">
    <location>
        <begin position="175"/>
        <end position="178"/>
    </location>
</feature>
<feature type="helix" evidence="6">
    <location>
        <begin position="182"/>
        <end position="192"/>
    </location>
</feature>
<feature type="helix" evidence="6">
    <location>
        <begin position="195"/>
        <end position="205"/>
    </location>
</feature>
<dbReference type="EC" id="1.15.1.1"/>
<dbReference type="EMBL" id="X03951">
    <property type="protein sequence ID" value="CAA27580.1"/>
    <property type="molecule type" value="Genomic_DNA"/>
</dbReference>
<dbReference type="EMBL" id="M20984">
    <property type="status" value="NOT_ANNOTATED_CDS"/>
    <property type="molecule type" value="Genomic_DNA"/>
</dbReference>
<dbReference type="EMBL" id="L19201">
    <property type="protein sequence ID" value="AAB03041.1"/>
    <property type="molecule type" value="Genomic_DNA"/>
</dbReference>
<dbReference type="EMBL" id="U00096">
    <property type="protein sequence ID" value="AAC76890.1"/>
    <property type="molecule type" value="Genomic_DNA"/>
</dbReference>
<dbReference type="EMBL" id="AP009048">
    <property type="protein sequence ID" value="BAE77401.1"/>
    <property type="molecule type" value="Genomic_DNA"/>
</dbReference>
<dbReference type="EMBL" id="X60699">
    <property type="protein sequence ID" value="CAA43108.1"/>
    <property type="molecule type" value="Genomic_DNA"/>
</dbReference>
<dbReference type="EMBL" id="M85158">
    <property type="protein sequence ID" value="AAA24528.1"/>
    <property type="status" value="ALT_SEQ"/>
    <property type="molecule type" value="Genomic_DNA"/>
</dbReference>
<dbReference type="PIR" id="A24141">
    <property type="entry name" value="DSECN"/>
</dbReference>
<dbReference type="RefSeq" id="NP_418344.3">
    <property type="nucleotide sequence ID" value="NC_000913.3"/>
</dbReference>
<dbReference type="RefSeq" id="WP_000122641.1">
    <property type="nucleotide sequence ID" value="NZ_SSZK01000014.1"/>
</dbReference>
<dbReference type="PDB" id="1D5N">
    <property type="method" value="X-ray"/>
    <property type="resolution" value="1.55 A"/>
    <property type="chains" value="A/B/C/D=2-206"/>
</dbReference>
<dbReference type="PDB" id="1EN4">
    <property type="method" value="X-ray"/>
    <property type="resolution" value="2.00 A"/>
    <property type="chains" value="A/B/C/D=2-206"/>
</dbReference>
<dbReference type="PDB" id="1EN5">
    <property type="method" value="X-ray"/>
    <property type="resolution" value="2.30 A"/>
    <property type="chains" value="A/B/C/D=2-206"/>
</dbReference>
<dbReference type="PDB" id="1EN6">
    <property type="method" value="X-ray"/>
    <property type="resolution" value="2.00 A"/>
    <property type="chains" value="A/B/C/D=2-206"/>
</dbReference>
<dbReference type="PDB" id="1I08">
    <property type="method" value="X-ray"/>
    <property type="resolution" value="2.20 A"/>
    <property type="chains" value="A/B/C/D=2-206"/>
</dbReference>
<dbReference type="PDB" id="1I0H">
    <property type="method" value="X-ray"/>
    <property type="resolution" value="1.35 A"/>
    <property type="chains" value="A/B=2-206"/>
</dbReference>
<dbReference type="PDB" id="1IX9">
    <property type="method" value="X-ray"/>
    <property type="resolution" value="0.90 A"/>
    <property type="chains" value="A/B=2-206"/>
</dbReference>
<dbReference type="PDB" id="1IXB">
    <property type="method" value="X-ray"/>
    <property type="resolution" value="0.90 A"/>
    <property type="chains" value="A/B=2-206"/>
</dbReference>
<dbReference type="PDB" id="1MMM">
    <property type="method" value="X-ray"/>
    <property type="resolution" value="2.20 A"/>
    <property type="chains" value="A/B=2-206"/>
</dbReference>
<dbReference type="PDB" id="1VEW">
    <property type="method" value="X-ray"/>
    <property type="resolution" value="2.10 A"/>
    <property type="chains" value="A/B/C/D=2-206"/>
</dbReference>
<dbReference type="PDB" id="1ZLZ">
    <property type="method" value="X-ray"/>
    <property type="resolution" value="1.55 A"/>
    <property type="chains" value="A/B=2-206"/>
</dbReference>
<dbReference type="PDB" id="3K9S">
    <property type="method" value="X-ray"/>
    <property type="resolution" value="1.55 A"/>
    <property type="chains" value="A/B/C/D=2-206"/>
</dbReference>
<dbReference type="PDB" id="3OT7">
    <property type="method" value="X-ray"/>
    <property type="resolution" value="1.90 A"/>
    <property type="chains" value="A/B/C/D=2-206"/>
</dbReference>
<dbReference type="PDBsum" id="1D5N"/>
<dbReference type="PDBsum" id="1EN4"/>
<dbReference type="PDBsum" id="1EN5"/>
<dbReference type="PDBsum" id="1EN6"/>
<dbReference type="PDBsum" id="1I08"/>
<dbReference type="PDBsum" id="1I0H"/>
<dbReference type="PDBsum" id="1IX9"/>
<dbReference type="PDBsum" id="1IXB"/>
<dbReference type="PDBsum" id="1MMM"/>
<dbReference type="PDBsum" id="1VEW"/>
<dbReference type="PDBsum" id="1ZLZ"/>
<dbReference type="PDBsum" id="3K9S"/>
<dbReference type="PDBsum" id="3OT7"/>
<dbReference type="SASBDB" id="P00448"/>
<dbReference type="SMR" id="P00448"/>
<dbReference type="BioGRID" id="4262227">
    <property type="interactions" value="71"/>
</dbReference>
<dbReference type="FunCoup" id="P00448">
    <property type="interactions" value="637"/>
</dbReference>
<dbReference type="IntAct" id="P00448">
    <property type="interactions" value="7"/>
</dbReference>
<dbReference type="STRING" id="511145.b3908"/>
<dbReference type="jPOST" id="P00448"/>
<dbReference type="PaxDb" id="511145-b3908"/>
<dbReference type="EnsemblBacteria" id="AAC76890">
    <property type="protein sequence ID" value="AAC76890"/>
    <property type="gene ID" value="b3908"/>
</dbReference>
<dbReference type="GeneID" id="948403"/>
<dbReference type="KEGG" id="ecj:JW3879"/>
<dbReference type="KEGG" id="eco:b3908"/>
<dbReference type="KEGG" id="ecoc:C3026_21130"/>
<dbReference type="PATRIC" id="fig|1411691.4.peg.2797"/>
<dbReference type="EchoBASE" id="EB0946"/>
<dbReference type="eggNOG" id="COG0605">
    <property type="taxonomic scope" value="Bacteria"/>
</dbReference>
<dbReference type="HOGENOM" id="CLU_031625_0_1_6"/>
<dbReference type="InParanoid" id="P00448"/>
<dbReference type="OMA" id="GSYEGWK"/>
<dbReference type="OrthoDB" id="9803125at2"/>
<dbReference type="PhylomeDB" id="P00448"/>
<dbReference type="BioCyc" id="EcoCyc:SUPEROX-DISMUTMN-MONOMER"/>
<dbReference type="BioCyc" id="MetaCyc:SUPEROX-DISMUTMN-MONOMER"/>
<dbReference type="BRENDA" id="1.15.1.1">
    <property type="organism ID" value="2026"/>
</dbReference>
<dbReference type="EvolutionaryTrace" id="P00448"/>
<dbReference type="PHI-base" id="PHI:9764"/>
<dbReference type="PRO" id="PR:P00448"/>
<dbReference type="Proteomes" id="UP000000625">
    <property type="component" value="Chromosome"/>
</dbReference>
<dbReference type="GO" id="GO:0005737">
    <property type="term" value="C:cytoplasm"/>
    <property type="evidence" value="ECO:0000314"/>
    <property type="project" value="EcoliWiki"/>
</dbReference>
<dbReference type="GO" id="GO:0005829">
    <property type="term" value="C:cytosol"/>
    <property type="evidence" value="ECO:0000314"/>
    <property type="project" value="EcoCyc"/>
</dbReference>
<dbReference type="GO" id="GO:0016209">
    <property type="term" value="F:antioxidant activity"/>
    <property type="evidence" value="ECO:0000315"/>
    <property type="project" value="EcoCyc"/>
</dbReference>
<dbReference type="GO" id="GO:0003677">
    <property type="term" value="F:DNA binding"/>
    <property type="evidence" value="ECO:0000314"/>
    <property type="project" value="EcoCyc"/>
</dbReference>
<dbReference type="GO" id="GO:0030145">
    <property type="term" value="F:manganese ion binding"/>
    <property type="evidence" value="ECO:0000314"/>
    <property type="project" value="EcoCyc"/>
</dbReference>
<dbReference type="GO" id="GO:0046872">
    <property type="term" value="F:metal ion binding"/>
    <property type="evidence" value="ECO:0000314"/>
    <property type="project" value="EcoliWiki"/>
</dbReference>
<dbReference type="GO" id="GO:0042803">
    <property type="term" value="F:protein homodimerization activity"/>
    <property type="evidence" value="ECO:0000314"/>
    <property type="project" value="EcoCyc"/>
</dbReference>
<dbReference type="GO" id="GO:0004784">
    <property type="term" value="F:superoxide dismutase activity"/>
    <property type="evidence" value="ECO:0000314"/>
    <property type="project" value="EcoCyc"/>
</dbReference>
<dbReference type="GO" id="GO:0071291">
    <property type="term" value="P:cellular response to selenium ion"/>
    <property type="evidence" value="ECO:0000270"/>
    <property type="project" value="EcoCyc"/>
</dbReference>
<dbReference type="GO" id="GO:0019430">
    <property type="term" value="P:removal of superoxide radicals"/>
    <property type="evidence" value="ECO:0000314"/>
    <property type="project" value="EcoliWiki"/>
</dbReference>
<dbReference type="GO" id="GO:0010447">
    <property type="term" value="P:response to acidic pH"/>
    <property type="evidence" value="ECO:0000315"/>
    <property type="project" value="EcoCyc"/>
</dbReference>
<dbReference type="GO" id="GO:0009408">
    <property type="term" value="P:response to heat"/>
    <property type="evidence" value="ECO:0000315"/>
    <property type="project" value="EcoCyc"/>
</dbReference>
<dbReference type="GO" id="GO:0006979">
    <property type="term" value="P:response to oxidative stress"/>
    <property type="evidence" value="ECO:0000315"/>
    <property type="project" value="EcoCyc"/>
</dbReference>
<dbReference type="GO" id="GO:0006801">
    <property type="term" value="P:superoxide metabolic process"/>
    <property type="evidence" value="ECO:0000314"/>
    <property type="project" value="EcoliWiki"/>
</dbReference>
<dbReference type="FunFam" id="1.10.287.990:FF:000001">
    <property type="entry name" value="Superoxide dismutase"/>
    <property type="match status" value="1"/>
</dbReference>
<dbReference type="FunFam" id="3.55.40.20:FF:000001">
    <property type="entry name" value="Superoxide dismutase"/>
    <property type="match status" value="1"/>
</dbReference>
<dbReference type="Gene3D" id="1.10.287.990">
    <property type="entry name" value="Fe,Mn superoxide dismutase (SOD) domain"/>
    <property type="match status" value="1"/>
</dbReference>
<dbReference type="Gene3D" id="3.55.40.20">
    <property type="entry name" value="Iron/manganese superoxide dismutase, C-terminal domain"/>
    <property type="match status" value="1"/>
</dbReference>
<dbReference type="InterPro" id="IPR001189">
    <property type="entry name" value="Mn/Fe_SOD"/>
</dbReference>
<dbReference type="InterPro" id="IPR019833">
    <property type="entry name" value="Mn/Fe_SOD_BS"/>
</dbReference>
<dbReference type="InterPro" id="IPR019832">
    <property type="entry name" value="Mn/Fe_SOD_C"/>
</dbReference>
<dbReference type="InterPro" id="IPR019831">
    <property type="entry name" value="Mn/Fe_SOD_N"/>
</dbReference>
<dbReference type="InterPro" id="IPR036324">
    <property type="entry name" value="Mn/Fe_SOD_N_sf"/>
</dbReference>
<dbReference type="InterPro" id="IPR036314">
    <property type="entry name" value="SOD_C_sf"/>
</dbReference>
<dbReference type="NCBIfam" id="NF008177">
    <property type="entry name" value="PRK10925.1"/>
    <property type="match status" value="1"/>
</dbReference>
<dbReference type="PANTHER" id="PTHR43595">
    <property type="entry name" value="37S RIBOSOMAL PROTEIN S26, MITOCHONDRIAL"/>
    <property type="match status" value="1"/>
</dbReference>
<dbReference type="PANTHER" id="PTHR43595:SF2">
    <property type="entry name" value="SMALL RIBOSOMAL SUBUNIT PROTEIN MS42"/>
    <property type="match status" value="1"/>
</dbReference>
<dbReference type="Pfam" id="PF02777">
    <property type="entry name" value="Sod_Fe_C"/>
    <property type="match status" value="1"/>
</dbReference>
<dbReference type="Pfam" id="PF00081">
    <property type="entry name" value="Sod_Fe_N"/>
    <property type="match status" value="1"/>
</dbReference>
<dbReference type="PIRSF" id="PIRSF000349">
    <property type="entry name" value="SODismutase"/>
    <property type="match status" value="1"/>
</dbReference>
<dbReference type="PRINTS" id="PR01703">
    <property type="entry name" value="MNSODISMTASE"/>
</dbReference>
<dbReference type="SUPFAM" id="SSF54719">
    <property type="entry name" value="Fe,Mn superoxide dismutase (SOD), C-terminal domain"/>
    <property type="match status" value="1"/>
</dbReference>
<dbReference type="SUPFAM" id="SSF46609">
    <property type="entry name" value="Fe,Mn superoxide dismutase (SOD), N-terminal domain"/>
    <property type="match status" value="1"/>
</dbReference>
<dbReference type="PROSITE" id="PS00088">
    <property type="entry name" value="SOD_MN"/>
    <property type="match status" value="1"/>
</dbReference>
<sequence>MSYTLPSLPYAYDALEPHFDKQTMEIHHTKHHQTYVNNANAALESLPEFANLPVEELITKLDQLPADKKTVLRNNAGGHANHSLFWKGLKKGTTLQGDLKAAIERDFGSVDNFKAEFEKAAASRFGSGWAWLVLKGDKLAVVSTANQDSPLMGEAISGASGFPIMGLDVWEHAYYLKFQNRRPDYIKEFWNVVNWDEAAARFAAKK</sequence>
<protein>
    <recommendedName>
        <fullName>Superoxide dismutase [Mn]</fullName>
        <ecNumber>1.15.1.1</ecNumber>
    </recommendedName>
    <alternativeName>
        <fullName>MnSOD</fullName>
    </alternativeName>
</protein>
<comment type="function">
    <text>Destroys superoxide anion radicals which are normally produced within the cells and which are toxic to biological systems.</text>
</comment>
<comment type="catalytic activity">
    <reaction>
        <text>2 superoxide + 2 H(+) = H2O2 + O2</text>
        <dbReference type="Rhea" id="RHEA:20696"/>
        <dbReference type="ChEBI" id="CHEBI:15378"/>
        <dbReference type="ChEBI" id="CHEBI:15379"/>
        <dbReference type="ChEBI" id="CHEBI:16240"/>
        <dbReference type="ChEBI" id="CHEBI:18421"/>
        <dbReference type="EC" id="1.15.1.1"/>
    </reaction>
</comment>
<comment type="cofactor">
    <cofactor>
        <name>Mn(2+)</name>
        <dbReference type="ChEBI" id="CHEBI:29035"/>
    </cofactor>
    <text>Binds 1 Mn(2+) ion per subunit.</text>
</comment>
<comment type="subunit">
    <text>Homodimer.</text>
</comment>
<comment type="similarity">
    <text evidence="5">Belongs to the iron/manganese superoxide dismutase family.</text>
</comment>
<gene>
    <name type="primary">sodA</name>
    <name type="ordered locus">b3908</name>
    <name type="ordered locus">JW3879</name>
</gene>
<proteinExistence type="evidence at protein level"/>
<name>SODM_ECOLI</name>
<organism>
    <name type="scientific">Escherichia coli (strain K12)</name>
    <dbReference type="NCBI Taxonomy" id="83333"/>
    <lineage>
        <taxon>Bacteria</taxon>
        <taxon>Pseudomonadati</taxon>
        <taxon>Pseudomonadota</taxon>
        <taxon>Gammaproteobacteria</taxon>
        <taxon>Enterobacterales</taxon>
        <taxon>Enterobacteriaceae</taxon>
        <taxon>Escherichia</taxon>
    </lineage>
</organism>
<accession>P00448</accession>
<accession>Q2M8K5</accession>
<reference key="1">
    <citation type="journal article" date="1986" name="Nucleic Acids Res.">
        <title>Structure and gene expression of the E. coli Mn-superoxide dismutase gene.</title>
        <authorList>
            <person name="Takeda Y."/>
            <person name="Avila H."/>
        </authorList>
    </citation>
    <scope>NUCLEOTIDE SEQUENCE [GENOMIC DNA]</scope>
</reference>
<reference key="2">
    <citation type="journal article" date="1993" name="Nucleic Acids Res.">
        <title>Analysis of the Escherichia coli genome. III. DNA sequence of the region from 87.2 to 89.2 minutes.</title>
        <authorList>
            <person name="Plunkett G. III"/>
            <person name="Burland V."/>
            <person name="Daniels D.L."/>
            <person name="Blattner F.R."/>
        </authorList>
    </citation>
    <scope>NUCLEOTIDE SEQUENCE [LARGE SCALE GENOMIC DNA]</scope>
    <source>
        <strain>K12 / MG1655 / ATCC 47076</strain>
    </source>
</reference>
<reference key="3">
    <citation type="journal article" date="1997" name="Science">
        <title>The complete genome sequence of Escherichia coli K-12.</title>
        <authorList>
            <person name="Blattner F.R."/>
            <person name="Plunkett G. III"/>
            <person name="Bloch C.A."/>
            <person name="Perna N.T."/>
            <person name="Burland V."/>
            <person name="Riley M."/>
            <person name="Collado-Vides J."/>
            <person name="Glasner J.D."/>
            <person name="Rode C.K."/>
            <person name="Mayhew G.F."/>
            <person name="Gregor J."/>
            <person name="Davis N.W."/>
            <person name="Kirkpatrick H.A."/>
            <person name="Goeden M.A."/>
            <person name="Rose D.J."/>
            <person name="Mau B."/>
            <person name="Shao Y."/>
        </authorList>
    </citation>
    <scope>NUCLEOTIDE SEQUENCE [LARGE SCALE GENOMIC DNA]</scope>
    <source>
        <strain>K12 / MG1655 / ATCC 47076</strain>
    </source>
</reference>
<reference key="4">
    <citation type="journal article" date="2006" name="Mol. Syst. Biol.">
        <title>Highly accurate genome sequences of Escherichia coli K-12 strains MG1655 and W3110.</title>
        <authorList>
            <person name="Hayashi K."/>
            <person name="Morooka N."/>
            <person name="Yamamoto Y."/>
            <person name="Fujita K."/>
            <person name="Isono K."/>
            <person name="Choi S."/>
            <person name="Ohtsubo E."/>
            <person name="Baba T."/>
            <person name="Wanner B.L."/>
            <person name="Mori H."/>
            <person name="Horiuchi T."/>
        </authorList>
    </citation>
    <scope>NUCLEOTIDE SEQUENCE [LARGE SCALE GENOMIC DNA]</scope>
    <source>
        <strain>K12 / W3110 / ATCC 27325 / DSM 5911</strain>
    </source>
</reference>
<reference key="5">
    <citation type="journal article" date="1978" name="J. Biol. Chem.">
        <title>The amino acid sequence of mangano superoxide dismutase from Escherichia coli B.</title>
        <authorList>
            <person name="Steinman H.M."/>
        </authorList>
    </citation>
    <scope>PROTEIN SEQUENCE OF 2-206</scope>
    <source>
        <strain>B</strain>
    </source>
</reference>
<reference key="6">
    <citation type="journal article" date="1992" name="J. Gen. Microbiol.">
        <title>Nucleotide sequence of the rhaR-sodA interval specifying rhaT in Escherichia coli.</title>
        <authorList>
            <person name="Garcia C."/>
            <person name="Baldoma L."/>
            <person name="Badia J."/>
            <person name="Aguilar J."/>
        </authorList>
    </citation>
    <scope>NUCLEOTIDE SEQUENCE [GENOMIC DNA] OF 1-96</scope>
    <source>
        <strain>K12</strain>
    </source>
</reference>
<reference key="7">
    <citation type="journal article" date="1992" name="J. Biol. Chem.">
        <title>Mapping, cloning, expression, and sequencing of the rhaT gene, which encodes a novel L-rhamnose-H+ transport protein in Salmonella typhimurium and Escherichia coli.</title>
        <authorList>
            <person name="Tate C.G."/>
            <person name="Muiry J.A.R."/>
            <person name="Henderson P.J.F."/>
        </authorList>
    </citation>
    <scope>NUCLEOTIDE SEQUENCE [GENOMIC DNA] OF 1-63</scope>
    <source>
        <strain>K12</strain>
    </source>
</reference>
<reference key="8">
    <citation type="journal article" date="1988" name="J. Bacteriol.">
        <title>Transcriptional and posttranscriptional regulation of manganese superoxide dismutase biosynthesis in Escherichia coli, studied with operon and protein fusions.</title>
        <authorList>
            <person name="Touati D."/>
        </authorList>
    </citation>
    <scope>NUCLEOTIDE SEQUENCE [GENOMIC DNA] OF 1-2</scope>
</reference>
<reference key="9">
    <citation type="journal article" date="1973" name="Proc. Natl. Acad. Sci. U.S.A.">
        <title>Sequence homologies among bacterial and mitochondrial superoxide dismutases.</title>
        <authorList>
            <person name="Steinman H.M."/>
            <person name="Hill R.L."/>
        </authorList>
    </citation>
    <scope>PROTEIN SEQUENCE OF 2-30</scope>
</reference>
<reference key="10">
    <citation type="submission" date="1994-09" db="UniProtKB">
        <authorList>
            <person name="Pasquali C."/>
            <person name="Sanchez J.-C."/>
            <person name="Ravier F."/>
            <person name="Golaz O."/>
            <person name="Hughes G.J."/>
            <person name="Frutiger S."/>
            <person name="Paquet N."/>
            <person name="Wilkins M."/>
            <person name="Appel R.D."/>
            <person name="Bairoch A."/>
            <person name="Hochstrasser D.F."/>
        </authorList>
    </citation>
    <scope>PROTEIN SEQUENCE OF 2-11</scope>
    <source>
        <strain>K12 / W3110 / ATCC 27325 / DSM 5911</strain>
    </source>
</reference>
<reference key="11">
    <citation type="journal article" date="1997" name="Electrophoresis">
        <title>Comparing the predicted and observed properties of proteins encoded in the genome of Escherichia coli K-12.</title>
        <authorList>
            <person name="Link A.J."/>
            <person name="Robison K."/>
            <person name="Church G.M."/>
        </authorList>
    </citation>
    <scope>PROTEIN SEQUENCE OF 2-13</scope>
    <source>
        <strain>K12 / EMG2</strain>
    </source>
</reference>
<reference key="12">
    <citation type="journal article" date="1997" name="Electrophoresis">
        <title>Escherichia coli proteome analysis using the gene-protein database.</title>
        <authorList>
            <person name="VanBogelen R.A."/>
            <person name="Abshire K.Z."/>
            <person name="Moldover B."/>
            <person name="Olson E.R."/>
            <person name="Neidhardt F.C."/>
        </authorList>
    </citation>
    <scope>IDENTIFICATION BY 2D-GEL</scope>
</reference>
<reference key="13">
    <citation type="journal article" date="2001" name="Biochemistry">
        <title>Outer sphere mutations perturb metal reactivity in manganese superoxide dismutase.</title>
        <authorList>
            <person name="Edwards R.A."/>
            <person name="Whittaker M.M."/>
            <person name="Whittaker J.W."/>
            <person name="Baker E.N."/>
            <person name="Jameson G.B."/>
        </authorList>
    </citation>
    <scope>X-RAY CRYSTALLOGRAPHY (2.0 ANGSTROMS) OF MUTANTS PHE-35; LEU-147 AND HIS-147</scope>
</reference>
<reference key="14">
    <citation type="journal article" date="2001" name="Biochemistry">
        <title>Removing a hydrogen bond in the dimer interface of Escherichia coli manganese superoxide dismutase alters structure and reactivity.</title>
        <authorList>
            <person name="Edwards R.A."/>
            <person name="Whittaker M.M."/>
            <person name="Whittaker J.W."/>
            <person name="Baker E.N."/>
            <person name="Jameson G.B."/>
        </authorList>
    </citation>
    <scope>X-RAY CRYSTALLOGRAPHY (1.35 ANGSTROMS) OF MUTANTS ALA-31 AND PHE-175</scope>
</reference>
<reference key="15">
    <citation type="journal article" date="1997" name="FEBS Lett.">
        <title>Paramagnetic NMR spectroscopy of native and cobalt substituted manganese superoxide dismutase from Escherichia coli.</title>
        <authorList>
            <person name="Renault J.P."/>
            <person name="Verchere-Beau R."/>
            <person name="Morgenstern-Badarau I."/>
            <person name="Piccioli M."/>
        </authorList>
    </citation>
    <scope>STRUCTURE BY NMR</scope>
</reference>
<reference key="16">
    <citation type="journal article" date="1998" name="J. Biol. Inorg. Chem.">
        <title>Crystal structure of Escherichia coli manganese superoxide dismutase at 2.1-A resolution.</title>
        <authorList>
            <person name="Edwards R.A."/>
            <person name="Baker H.M."/>
            <person name="Whittaker M.M."/>
            <person name="Whittaker J.W."/>
            <person name="Jameson G.B."/>
            <person name="Baker E.N."/>
        </authorList>
    </citation>
    <scope>X-RAY CRYSTALLOGRAPHY (2.1 ANGSTROMS)</scope>
</reference>
<reference key="17">
    <citation type="journal article" date="2000" name="J. Mol. Biol.">
        <title>Cryo-trapping the six-coordinate, distorted-octahedral active site of manganese superoxide dismutase.</title>
        <authorList>
            <person name="Borgstahl G.E."/>
            <person name="Pokross M."/>
            <person name="Chehab R."/>
            <person name="Sekher A."/>
            <person name="Snell E.H."/>
        </authorList>
    </citation>
    <scope>X-RAY CRYSTALLOGRAPHY (1.55 ANGSTROMS)</scope>
</reference>
<keyword id="KW-0002">3D-structure</keyword>
<keyword id="KW-0903">Direct protein sequencing</keyword>
<keyword id="KW-0464">Manganese</keyword>
<keyword id="KW-0479">Metal-binding</keyword>
<keyword id="KW-0560">Oxidoreductase</keyword>
<keyword id="KW-1185">Reference proteome</keyword>
<evidence type="ECO:0000269" key="1">
    <source>
    </source>
</evidence>
<evidence type="ECO:0000269" key="2">
    <source>
    </source>
</evidence>
<evidence type="ECO:0000269" key="3">
    <source>
    </source>
</evidence>
<evidence type="ECO:0000269" key="4">
    <source ref="10"/>
</evidence>
<evidence type="ECO:0000305" key="5"/>
<evidence type="ECO:0007829" key="6">
    <source>
        <dbReference type="PDB" id="1IX9"/>
    </source>
</evidence>